<comment type="function">
    <text evidence="1">Found in functional membrane microdomains (FMM) that may be equivalent to eukaryotic membrane rafts. FMMs are highly dynamic and increase in number as cells age. Flotillins are thought to be important factors in membrane fluidity.</text>
</comment>
<comment type="subunit">
    <text evidence="1">Homooligomerizes.</text>
</comment>
<comment type="subcellular location">
    <subcellularLocation>
        <location evidence="1">Cell membrane</location>
        <topology evidence="1">Single-pass membrane protein</topology>
    </subcellularLocation>
    <subcellularLocation>
        <location evidence="1">Membrane raft</location>
        <topology evidence="1">Single-pass membrane protein</topology>
    </subcellularLocation>
</comment>
<comment type="similarity">
    <text evidence="1">Belongs to the flotillin-like FloA family.</text>
</comment>
<dbReference type="EMBL" id="CP001032">
    <property type="protein sequence ID" value="ACB74948.1"/>
    <property type="molecule type" value="Genomic_DNA"/>
</dbReference>
<dbReference type="RefSeq" id="WP_012374485.1">
    <property type="nucleotide sequence ID" value="NC_010571.1"/>
</dbReference>
<dbReference type="SMR" id="B1ZUR4"/>
<dbReference type="STRING" id="452637.Oter_1664"/>
<dbReference type="KEGG" id="ote:Oter_1664"/>
<dbReference type="eggNOG" id="COG4864">
    <property type="taxonomic scope" value="Bacteria"/>
</dbReference>
<dbReference type="HOGENOM" id="CLU_836378_0_0_0"/>
<dbReference type="OrthoDB" id="9808365at2"/>
<dbReference type="Proteomes" id="UP000007013">
    <property type="component" value="Chromosome"/>
</dbReference>
<dbReference type="GO" id="GO:0045121">
    <property type="term" value="C:membrane raft"/>
    <property type="evidence" value="ECO:0007669"/>
    <property type="project" value="UniProtKB-SubCell"/>
</dbReference>
<dbReference type="GO" id="GO:0005886">
    <property type="term" value="C:plasma membrane"/>
    <property type="evidence" value="ECO:0007669"/>
    <property type="project" value="UniProtKB-SubCell"/>
</dbReference>
<dbReference type="HAMAP" id="MF_01562">
    <property type="entry name" value="FloA"/>
    <property type="match status" value="1"/>
</dbReference>
<dbReference type="InterPro" id="IPR022853">
    <property type="entry name" value="FloA"/>
</dbReference>
<dbReference type="NCBIfam" id="NF010186">
    <property type="entry name" value="PRK13665.1"/>
    <property type="match status" value="1"/>
</dbReference>
<dbReference type="Pfam" id="PF12127">
    <property type="entry name" value="FloA"/>
    <property type="match status" value="1"/>
</dbReference>
<sequence length="334" mass="35887">MNLYLIFLIVVGVVGLVLVGLFLSFFSVWLRALLAGAPVSPFNLVAMRLRQVPYSVMVDARIRATKAGIKLSIDEIEAQYLAGGNVIACVHALIAAQKARIALDWQRACAIDLATKGSGKSVEEAVRTSVDPKVIDCPNPESGRTTIDGVAKDGIQVKVKARVTVRTNLDRFVGGAKEETIIARVGEGIVSTIGSAESYKVVLESPDAISKTVLHRGLDVGSAFEILSIDIADVDVGENVGAKLQEAQAQANKSIAQAQAEIRRAAAVALEQEMVARVQEMQAKVVEAQSQVPLAMAEAFRSGRLGVMDYFRMENIQGDTAMRNSLARPEDKKQ</sequence>
<protein>
    <recommendedName>
        <fullName evidence="1">Flotillin-like protein FloA</fullName>
    </recommendedName>
</protein>
<reference key="1">
    <citation type="journal article" date="2011" name="J. Bacteriol.">
        <title>Genome sequence of the verrucomicrobium Opitutus terrae PB90-1, an abundant inhabitant of rice paddy soil ecosystems.</title>
        <authorList>
            <person name="van Passel M.W."/>
            <person name="Kant R."/>
            <person name="Palva A."/>
            <person name="Copeland A."/>
            <person name="Lucas S."/>
            <person name="Lapidus A."/>
            <person name="Glavina del Rio T."/>
            <person name="Pitluck S."/>
            <person name="Goltsman E."/>
            <person name="Clum A."/>
            <person name="Sun H."/>
            <person name="Schmutz J."/>
            <person name="Larimer F.W."/>
            <person name="Land M.L."/>
            <person name="Hauser L."/>
            <person name="Kyrpides N."/>
            <person name="Mikhailova N."/>
            <person name="Richardson P.P."/>
            <person name="Janssen P.H."/>
            <person name="de Vos W.M."/>
            <person name="Smidt H."/>
        </authorList>
    </citation>
    <scope>NUCLEOTIDE SEQUENCE [LARGE SCALE GENOMIC DNA]</scope>
    <source>
        <strain>DSM 11246 / JCM 15787 / PB90-1</strain>
    </source>
</reference>
<name>FLOA_OPITP</name>
<evidence type="ECO:0000255" key="1">
    <source>
        <dbReference type="HAMAP-Rule" id="MF_01562"/>
    </source>
</evidence>
<gene>
    <name evidence="1" type="primary">floA</name>
    <name type="ordered locus">Oter_1664</name>
</gene>
<feature type="chain" id="PRO_1000185440" description="Flotillin-like protein FloA">
    <location>
        <begin position="1"/>
        <end position="334"/>
    </location>
</feature>
<feature type="transmembrane region" description="Helical" evidence="1">
    <location>
        <begin position="3"/>
        <end position="23"/>
    </location>
</feature>
<proteinExistence type="inferred from homology"/>
<organism>
    <name type="scientific">Opitutus terrae (strain DSM 11246 / JCM 15787 / PB90-1)</name>
    <dbReference type="NCBI Taxonomy" id="452637"/>
    <lineage>
        <taxon>Bacteria</taxon>
        <taxon>Pseudomonadati</taxon>
        <taxon>Verrucomicrobiota</taxon>
        <taxon>Opitutia</taxon>
        <taxon>Opitutales</taxon>
        <taxon>Opitutaceae</taxon>
        <taxon>Opitutus</taxon>
    </lineage>
</organism>
<keyword id="KW-1003">Cell membrane</keyword>
<keyword id="KW-0472">Membrane</keyword>
<keyword id="KW-1185">Reference proteome</keyword>
<keyword id="KW-0812">Transmembrane</keyword>
<keyword id="KW-1133">Transmembrane helix</keyword>
<accession>B1ZUR4</accession>